<proteinExistence type="inferred from homology"/>
<name>RPOA_BACVZ</name>
<sequence length="314" mass="34813">MIEIEKPKIETVEISDDAKFGKFVVEPLERGYGTTLGNSLRRILLSSLPGAAVTSIQIDGVLHEFSTIEGVVEDVTTIILHIKKLALKIYSDEEKTLEIDVQGEGTVTAADITHDSDVEILNPDLHIATLGENASFRVRLTAQRGRGYTPADSNKRDDQPIGVIPIDSIFTPVSRLSYQVENTRVGQVANYDKLTLDVWTDGSTGPKEAIALGSKILTEHLNIFVGLTDEAQHAEIMVEKEEDQKEKVLEMTIEELDLSVRSYNCLKRAGINTVQELANKTEEDMMKVRNLGRKSLEEVKAKLEELGLGLRKDD</sequence>
<evidence type="ECO:0000255" key="1">
    <source>
        <dbReference type="HAMAP-Rule" id="MF_00059"/>
    </source>
</evidence>
<feature type="chain" id="PRO_0000323618" description="DNA-directed RNA polymerase subunit alpha">
    <location>
        <begin position="1"/>
        <end position="314"/>
    </location>
</feature>
<feature type="region of interest" description="Alpha N-terminal domain (alpha-NTD)" evidence="1">
    <location>
        <begin position="1"/>
        <end position="228"/>
    </location>
</feature>
<feature type="region of interest" description="Alpha C-terminal domain (alpha-CTD)" evidence="1">
    <location>
        <begin position="246"/>
        <end position="314"/>
    </location>
</feature>
<reference key="1">
    <citation type="journal article" date="2007" name="Nat. Biotechnol.">
        <title>Comparative analysis of the complete genome sequence of the plant growth-promoting bacterium Bacillus amyloliquefaciens FZB42.</title>
        <authorList>
            <person name="Chen X.H."/>
            <person name="Koumoutsi A."/>
            <person name="Scholz R."/>
            <person name="Eisenreich A."/>
            <person name="Schneider K."/>
            <person name="Heinemeyer I."/>
            <person name="Morgenstern B."/>
            <person name="Voss B."/>
            <person name="Hess W.R."/>
            <person name="Reva O."/>
            <person name="Junge H."/>
            <person name="Voigt B."/>
            <person name="Jungblut P.R."/>
            <person name="Vater J."/>
            <person name="Suessmuth R."/>
            <person name="Liesegang H."/>
            <person name="Strittmatter A."/>
            <person name="Gottschalk G."/>
            <person name="Borriss R."/>
        </authorList>
    </citation>
    <scope>NUCLEOTIDE SEQUENCE [LARGE SCALE GENOMIC DNA]</scope>
    <source>
        <strain>DSM 23117 / BGSC 10A6 / LMG 26770 / FZB42</strain>
    </source>
</reference>
<organism>
    <name type="scientific">Bacillus velezensis (strain DSM 23117 / BGSC 10A6 / LMG 26770 / FZB42)</name>
    <name type="common">Bacillus amyloliquefaciens subsp. plantarum</name>
    <dbReference type="NCBI Taxonomy" id="326423"/>
    <lineage>
        <taxon>Bacteria</taxon>
        <taxon>Bacillati</taxon>
        <taxon>Bacillota</taxon>
        <taxon>Bacilli</taxon>
        <taxon>Bacillales</taxon>
        <taxon>Bacillaceae</taxon>
        <taxon>Bacillus</taxon>
        <taxon>Bacillus amyloliquefaciens group</taxon>
    </lineage>
</organism>
<protein>
    <recommendedName>
        <fullName evidence="1">DNA-directed RNA polymerase subunit alpha</fullName>
        <shortName evidence="1">RNAP subunit alpha</shortName>
        <ecNumber evidence="1">2.7.7.6</ecNumber>
    </recommendedName>
    <alternativeName>
        <fullName evidence="1">RNA polymerase subunit alpha</fullName>
    </alternativeName>
    <alternativeName>
        <fullName evidence="1">Transcriptase subunit alpha</fullName>
    </alternativeName>
</protein>
<gene>
    <name evidence="1" type="primary">rpoA</name>
    <name type="ordered locus">RBAM_001680</name>
</gene>
<keyword id="KW-0240">DNA-directed RNA polymerase</keyword>
<keyword id="KW-0548">Nucleotidyltransferase</keyword>
<keyword id="KW-0804">Transcription</keyword>
<keyword id="KW-0808">Transferase</keyword>
<accession>A7Z0R5</accession>
<dbReference type="EC" id="2.7.7.6" evidence="1"/>
<dbReference type="EMBL" id="CP000560">
    <property type="protein sequence ID" value="ABS72591.1"/>
    <property type="molecule type" value="Genomic_DNA"/>
</dbReference>
<dbReference type="RefSeq" id="WP_003156549.1">
    <property type="nucleotide sequence ID" value="NC_009725.2"/>
</dbReference>
<dbReference type="SMR" id="A7Z0R5"/>
<dbReference type="GeneID" id="93079307"/>
<dbReference type="KEGG" id="bay:RBAM_001680"/>
<dbReference type="HOGENOM" id="CLU_053084_0_1_9"/>
<dbReference type="Proteomes" id="UP000001120">
    <property type="component" value="Chromosome"/>
</dbReference>
<dbReference type="GO" id="GO:0005737">
    <property type="term" value="C:cytoplasm"/>
    <property type="evidence" value="ECO:0007669"/>
    <property type="project" value="UniProtKB-ARBA"/>
</dbReference>
<dbReference type="GO" id="GO:0000428">
    <property type="term" value="C:DNA-directed RNA polymerase complex"/>
    <property type="evidence" value="ECO:0007669"/>
    <property type="project" value="UniProtKB-KW"/>
</dbReference>
<dbReference type="GO" id="GO:0003677">
    <property type="term" value="F:DNA binding"/>
    <property type="evidence" value="ECO:0007669"/>
    <property type="project" value="UniProtKB-UniRule"/>
</dbReference>
<dbReference type="GO" id="GO:0003899">
    <property type="term" value="F:DNA-directed RNA polymerase activity"/>
    <property type="evidence" value="ECO:0007669"/>
    <property type="project" value="UniProtKB-UniRule"/>
</dbReference>
<dbReference type="GO" id="GO:0046983">
    <property type="term" value="F:protein dimerization activity"/>
    <property type="evidence" value="ECO:0007669"/>
    <property type="project" value="InterPro"/>
</dbReference>
<dbReference type="GO" id="GO:0006351">
    <property type="term" value="P:DNA-templated transcription"/>
    <property type="evidence" value="ECO:0007669"/>
    <property type="project" value="UniProtKB-UniRule"/>
</dbReference>
<dbReference type="CDD" id="cd06928">
    <property type="entry name" value="RNAP_alpha_NTD"/>
    <property type="match status" value="1"/>
</dbReference>
<dbReference type="FunFam" id="1.10.150.20:FF:000001">
    <property type="entry name" value="DNA-directed RNA polymerase subunit alpha"/>
    <property type="match status" value="1"/>
</dbReference>
<dbReference type="FunFam" id="2.170.120.12:FF:000001">
    <property type="entry name" value="DNA-directed RNA polymerase subunit alpha"/>
    <property type="match status" value="1"/>
</dbReference>
<dbReference type="Gene3D" id="1.10.150.20">
    <property type="entry name" value="5' to 3' exonuclease, C-terminal subdomain"/>
    <property type="match status" value="1"/>
</dbReference>
<dbReference type="Gene3D" id="2.170.120.12">
    <property type="entry name" value="DNA-directed RNA polymerase, insert domain"/>
    <property type="match status" value="1"/>
</dbReference>
<dbReference type="Gene3D" id="3.30.1360.10">
    <property type="entry name" value="RNA polymerase, RBP11-like subunit"/>
    <property type="match status" value="1"/>
</dbReference>
<dbReference type="HAMAP" id="MF_00059">
    <property type="entry name" value="RNApol_bact_RpoA"/>
    <property type="match status" value="1"/>
</dbReference>
<dbReference type="InterPro" id="IPR011262">
    <property type="entry name" value="DNA-dir_RNA_pol_insert"/>
</dbReference>
<dbReference type="InterPro" id="IPR011263">
    <property type="entry name" value="DNA-dir_RNA_pol_RpoA/D/Rpb3"/>
</dbReference>
<dbReference type="InterPro" id="IPR011773">
    <property type="entry name" value="DNA-dir_RpoA"/>
</dbReference>
<dbReference type="InterPro" id="IPR036603">
    <property type="entry name" value="RBP11-like"/>
</dbReference>
<dbReference type="InterPro" id="IPR011260">
    <property type="entry name" value="RNAP_asu_C"/>
</dbReference>
<dbReference type="InterPro" id="IPR036643">
    <property type="entry name" value="RNApol_insert_sf"/>
</dbReference>
<dbReference type="NCBIfam" id="NF003513">
    <property type="entry name" value="PRK05182.1-2"/>
    <property type="match status" value="1"/>
</dbReference>
<dbReference type="NCBIfam" id="NF003515">
    <property type="entry name" value="PRK05182.2-1"/>
    <property type="match status" value="1"/>
</dbReference>
<dbReference type="NCBIfam" id="NF003519">
    <property type="entry name" value="PRK05182.2-5"/>
    <property type="match status" value="1"/>
</dbReference>
<dbReference type="NCBIfam" id="TIGR02027">
    <property type="entry name" value="rpoA"/>
    <property type="match status" value="1"/>
</dbReference>
<dbReference type="Pfam" id="PF01000">
    <property type="entry name" value="RNA_pol_A_bac"/>
    <property type="match status" value="1"/>
</dbReference>
<dbReference type="Pfam" id="PF03118">
    <property type="entry name" value="RNA_pol_A_CTD"/>
    <property type="match status" value="1"/>
</dbReference>
<dbReference type="Pfam" id="PF01193">
    <property type="entry name" value="RNA_pol_L"/>
    <property type="match status" value="1"/>
</dbReference>
<dbReference type="SMART" id="SM00662">
    <property type="entry name" value="RPOLD"/>
    <property type="match status" value="1"/>
</dbReference>
<dbReference type="SUPFAM" id="SSF47789">
    <property type="entry name" value="C-terminal domain of RNA polymerase alpha subunit"/>
    <property type="match status" value="1"/>
</dbReference>
<dbReference type="SUPFAM" id="SSF56553">
    <property type="entry name" value="Insert subdomain of RNA polymerase alpha subunit"/>
    <property type="match status" value="1"/>
</dbReference>
<dbReference type="SUPFAM" id="SSF55257">
    <property type="entry name" value="RBP11-like subunits of RNA polymerase"/>
    <property type="match status" value="1"/>
</dbReference>
<comment type="function">
    <text evidence="1">DNA-dependent RNA polymerase catalyzes the transcription of DNA into RNA using the four ribonucleoside triphosphates as substrates.</text>
</comment>
<comment type="catalytic activity">
    <reaction evidence="1">
        <text>RNA(n) + a ribonucleoside 5'-triphosphate = RNA(n+1) + diphosphate</text>
        <dbReference type="Rhea" id="RHEA:21248"/>
        <dbReference type="Rhea" id="RHEA-COMP:14527"/>
        <dbReference type="Rhea" id="RHEA-COMP:17342"/>
        <dbReference type="ChEBI" id="CHEBI:33019"/>
        <dbReference type="ChEBI" id="CHEBI:61557"/>
        <dbReference type="ChEBI" id="CHEBI:140395"/>
        <dbReference type="EC" id="2.7.7.6"/>
    </reaction>
</comment>
<comment type="subunit">
    <text evidence="1">Homodimer. The RNAP catalytic core consists of 2 alpha, 1 beta, 1 beta' and 1 omega subunit. When a sigma factor is associated with the core the holoenzyme is formed, which can initiate transcription.</text>
</comment>
<comment type="domain">
    <text evidence="1">The N-terminal domain is essential for RNAP assembly and basal transcription, whereas the C-terminal domain is involved in interaction with transcriptional regulators and with upstream promoter elements.</text>
</comment>
<comment type="similarity">
    <text evidence="1">Belongs to the RNA polymerase alpha chain family.</text>
</comment>